<accession>Q7W2K5</accession>
<proteinExistence type="inferred from homology"/>
<sequence length="469" mass="52395">MKEFWQTCVSRLEQELPPQQISAWIRPLVPLAYDEAQAVLRVAAPNRFKLDWVRKNFSHQIEALAAEWYQRPVQVTFELPGTSSAPRIPMAVPRPVAVSVPAVVAAVQQASEPAPPAPASADAANIVYERSRLNTDLTFENFVTGKANQLARAAALQVAENPGTSYNPLFLYGGVGLGKTHLIHAIGNAMVAAGTGVRVRYVHADQYVSDVVKAYQRKAFDDFKRYYHSLDLLLIDDIQFFSGKNRTQEEFFYAFEAMVAQRKQIIITSDTYPKELSGIDSRLISRFDSGLTVAIEPPELEMRVAILLRKAESEGVPMPEEVAFFIAKHLRSNVRELEGALRKVLAYARFHGRDVLTVDVCKEALKDLLSVSNGQITVENIQKTVADFYKIKVADMYSKRRPANIALPRQVAMYLAKELTQKSLPEIGDLFGGRDHTTVLHAVRKISDARAKQAELNHTLHVLEQTLKG</sequence>
<protein>
    <recommendedName>
        <fullName evidence="1">Chromosomal replication initiator protein DnaA</fullName>
    </recommendedName>
</protein>
<organism>
    <name type="scientific">Bordetella parapertussis (strain 12822 / ATCC BAA-587 / NCTC 13253)</name>
    <dbReference type="NCBI Taxonomy" id="257311"/>
    <lineage>
        <taxon>Bacteria</taxon>
        <taxon>Pseudomonadati</taxon>
        <taxon>Pseudomonadota</taxon>
        <taxon>Betaproteobacteria</taxon>
        <taxon>Burkholderiales</taxon>
        <taxon>Alcaligenaceae</taxon>
        <taxon>Bordetella</taxon>
    </lineage>
</organism>
<reference key="1">
    <citation type="journal article" date="2003" name="Nat. Genet.">
        <title>Comparative analysis of the genome sequences of Bordetella pertussis, Bordetella parapertussis and Bordetella bronchiseptica.</title>
        <authorList>
            <person name="Parkhill J."/>
            <person name="Sebaihia M."/>
            <person name="Preston A."/>
            <person name="Murphy L.D."/>
            <person name="Thomson N.R."/>
            <person name="Harris D.E."/>
            <person name="Holden M.T.G."/>
            <person name="Churcher C.M."/>
            <person name="Bentley S.D."/>
            <person name="Mungall K.L."/>
            <person name="Cerdeno-Tarraga A.-M."/>
            <person name="Temple L."/>
            <person name="James K.D."/>
            <person name="Harris B."/>
            <person name="Quail M.A."/>
            <person name="Achtman M."/>
            <person name="Atkin R."/>
            <person name="Baker S."/>
            <person name="Basham D."/>
            <person name="Bason N."/>
            <person name="Cherevach I."/>
            <person name="Chillingworth T."/>
            <person name="Collins M."/>
            <person name="Cronin A."/>
            <person name="Davis P."/>
            <person name="Doggett J."/>
            <person name="Feltwell T."/>
            <person name="Goble A."/>
            <person name="Hamlin N."/>
            <person name="Hauser H."/>
            <person name="Holroyd S."/>
            <person name="Jagels K."/>
            <person name="Leather S."/>
            <person name="Moule S."/>
            <person name="Norberczak H."/>
            <person name="O'Neil S."/>
            <person name="Ormond D."/>
            <person name="Price C."/>
            <person name="Rabbinowitsch E."/>
            <person name="Rutter S."/>
            <person name="Sanders M."/>
            <person name="Saunders D."/>
            <person name="Seeger K."/>
            <person name="Sharp S."/>
            <person name="Simmonds M."/>
            <person name="Skelton J."/>
            <person name="Squares R."/>
            <person name="Squares S."/>
            <person name="Stevens K."/>
            <person name="Unwin L."/>
            <person name="Whitehead S."/>
            <person name="Barrell B.G."/>
            <person name="Maskell D.J."/>
        </authorList>
    </citation>
    <scope>NUCLEOTIDE SEQUENCE [LARGE SCALE GENOMIC DNA]</scope>
    <source>
        <strain>12822 / ATCC BAA-587 / NCTC 13253</strain>
    </source>
</reference>
<name>DNAA_BORPA</name>
<evidence type="ECO:0000255" key="1">
    <source>
        <dbReference type="HAMAP-Rule" id="MF_00377"/>
    </source>
</evidence>
<keyword id="KW-0067">ATP-binding</keyword>
<keyword id="KW-0963">Cytoplasm</keyword>
<keyword id="KW-0235">DNA replication</keyword>
<keyword id="KW-0238">DNA-binding</keyword>
<keyword id="KW-0446">Lipid-binding</keyword>
<keyword id="KW-0547">Nucleotide-binding</keyword>
<gene>
    <name evidence="1" type="primary">dnaA</name>
    <name type="ordered locus">BPP4401</name>
</gene>
<feature type="chain" id="PRO_0000114142" description="Chromosomal replication initiator protein DnaA">
    <location>
        <begin position="1"/>
        <end position="469"/>
    </location>
</feature>
<feature type="region of interest" description="Domain I, interacts with DnaA modulators" evidence="1">
    <location>
        <begin position="1"/>
        <end position="71"/>
    </location>
</feature>
<feature type="region of interest" description="Domain II" evidence="1">
    <location>
        <begin position="71"/>
        <end position="131"/>
    </location>
</feature>
<feature type="region of interest" description="Domain III, AAA+ region" evidence="1">
    <location>
        <begin position="132"/>
        <end position="348"/>
    </location>
</feature>
<feature type="region of interest" description="Domain IV, binds dsDNA" evidence="1">
    <location>
        <begin position="349"/>
        <end position="469"/>
    </location>
</feature>
<feature type="binding site" evidence="1">
    <location>
        <position position="176"/>
    </location>
    <ligand>
        <name>ATP</name>
        <dbReference type="ChEBI" id="CHEBI:30616"/>
    </ligand>
</feature>
<feature type="binding site" evidence="1">
    <location>
        <position position="178"/>
    </location>
    <ligand>
        <name>ATP</name>
        <dbReference type="ChEBI" id="CHEBI:30616"/>
    </ligand>
</feature>
<feature type="binding site" evidence="1">
    <location>
        <position position="179"/>
    </location>
    <ligand>
        <name>ATP</name>
        <dbReference type="ChEBI" id="CHEBI:30616"/>
    </ligand>
</feature>
<feature type="binding site" evidence="1">
    <location>
        <position position="180"/>
    </location>
    <ligand>
        <name>ATP</name>
        <dbReference type="ChEBI" id="CHEBI:30616"/>
    </ligand>
</feature>
<dbReference type="EMBL" id="BX640436">
    <property type="protein sequence ID" value="CAE39680.1"/>
    <property type="molecule type" value="Genomic_DNA"/>
</dbReference>
<dbReference type="RefSeq" id="WP_010929554.1">
    <property type="nucleotide sequence ID" value="NC_002928.3"/>
</dbReference>
<dbReference type="SMR" id="Q7W2K5"/>
<dbReference type="GeneID" id="69600221"/>
<dbReference type="GeneID" id="93206201"/>
<dbReference type="KEGG" id="bpa:BPP4401"/>
<dbReference type="HOGENOM" id="CLU_026910_0_1_4"/>
<dbReference type="Proteomes" id="UP000001421">
    <property type="component" value="Chromosome"/>
</dbReference>
<dbReference type="GO" id="GO:0005737">
    <property type="term" value="C:cytoplasm"/>
    <property type="evidence" value="ECO:0007669"/>
    <property type="project" value="UniProtKB-SubCell"/>
</dbReference>
<dbReference type="GO" id="GO:0005886">
    <property type="term" value="C:plasma membrane"/>
    <property type="evidence" value="ECO:0007669"/>
    <property type="project" value="TreeGrafter"/>
</dbReference>
<dbReference type="GO" id="GO:0005524">
    <property type="term" value="F:ATP binding"/>
    <property type="evidence" value="ECO:0007669"/>
    <property type="project" value="UniProtKB-UniRule"/>
</dbReference>
<dbReference type="GO" id="GO:0016887">
    <property type="term" value="F:ATP hydrolysis activity"/>
    <property type="evidence" value="ECO:0007669"/>
    <property type="project" value="InterPro"/>
</dbReference>
<dbReference type="GO" id="GO:0003688">
    <property type="term" value="F:DNA replication origin binding"/>
    <property type="evidence" value="ECO:0007669"/>
    <property type="project" value="UniProtKB-UniRule"/>
</dbReference>
<dbReference type="GO" id="GO:0008289">
    <property type="term" value="F:lipid binding"/>
    <property type="evidence" value="ECO:0007669"/>
    <property type="project" value="UniProtKB-KW"/>
</dbReference>
<dbReference type="GO" id="GO:0006270">
    <property type="term" value="P:DNA replication initiation"/>
    <property type="evidence" value="ECO:0007669"/>
    <property type="project" value="UniProtKB-UniRule"/>
</dbReference>
<dbReference type="GO" id="GO:0006275">
    <property type="term" value="P:regulation of DNA replication"/>
    <property type="evidence" value="ECO:0007669"/>
    <property type="project" value="UniProtKB-UniRule"/>
</dbReference>
<dbReference type="CDD" id="cd00009">
    <property type="entry name" value="AAA"/>
    <property type="match status" value="1"/>
</dbReference>
<dbReference type="CDD" id="cd06571">
    <property type="entry name" value="Bac_DnaA_C"/>
    <property type="match status" value="1"/>
</dbReference>
<dbReference type="FunFam" id="1.10.8.60:FF:000003">
    <property type="entry name" value="Chromosomal replication initiator protein DnaA"/>
    <property type="match status" value="1"/>
</dbReference>
<dbReference type="FunFam" id="3.40.50.300:FF:000668">
    <property type="entry name" value="Chromosomal replication initiator protein DnaA"/>
    <property type="match status" value="1"/>
</dbReference>
<dbReference type="Gene3D" id="1.10.1750.10">
    <property type="match status" value="1"/>
</dbReference>
<dbReference type="Gene3D" id="1.10.8.60">
    <property type="match status" value="1"/>
</dbReference>
<dbReference type="Gene3D" id="3.30.300.180">
    <property type="match status" value="1"/>
</dbReference>
<dbReference type="Gene3D" id="3.40.50.300">
    <property type="entry name" value="P-loop containing nucleotide triphosphate hydrolases"/>
    <property type="match status" value="1"/>
</dbReference>
<dbReference type="HAMAP" id="MF_00377">
    <property type="entry name" value="DnaA_bact"/>
    <property type="match status" value="1"/>
</dbReference>
<dbReference type="InterPro" id="IPR003593">
    <property type="entry name" value="AAA+_ATPase"/>
</dbReference>
<dbReference type="InterPro" id="IPR001957">
    <property type="entry name" value="Chromosome_initiator_DnaA"/>
</dbReference>
<dbReference type="InterPro" id="IPR020591">
    <property type="entry name" value="Chromosome_initiator_DnaA-like"/>
</dbReference>
<dbReference type="InterPro" id="IPR018312">
    <property type="entry name" value="Chromosome_initiator_DnaA_CS"/>
</dbReference>
<dbReference type="InterPro" id="IPR013159">
    <property type="entry name" value="DnaA_C"/>
</dbReference>
<dbReference type="InterPro" id="IPR013317">
    <property type="entry name" value="DnaA_dom"/>
</dbReference>
<dbReference type="InterPro" id="IPR024633">
    <property type="entry name" value="DnaA_N_dom"/>
</dbReference>
<dbReference type="InterPro" id="IPR038454">
    <property type="entry name" value="DnaA_N_sf"/>
</dbReference>
<dbReference type="InterPro" id="IPR027417">
    <property type="entry name" value="P-loop_NTPase"/>
</dbReference>
<dbReference type="InterPro" id="IPR010921">
    <property type="entry name" value="Trp_repressor/repl_initiator"/>
</dbReference>
<dbReference type="NCBIfam" id="TIGR00362">
    <property type="entry name" value="DnaA"/>
    <property type="match status" value="1"/>
</dbReference>
<dbReference type="PANTHER" id="PTHR30050">
    <property type="entry name" value="CHROMOSOMAL REPLICATION INITIATOR PROTEIN DNAA"/>
    <property type="match status" value="1"/>
</dbReference>
<dbReference type="PANTHER" id="PTHR30050:SF2">
    <property type="entry name" value="CHROMOSOMAL REPLICATION INITIATOR PROTEIN DNAA"/>
    <property type="match status" value="1"/>
</dbReference>
<dbReference type="Pfam" id="PF00308">
    <property type="entry name" value="Bac_DnaA"/>
    <property type="match status" value="1"/>
</dbReference>
<dbReference type="Pfam" id="PF08299">
    <property type="entry name" value="Bac_DnaA_C"/>
    <property type="match status" value="1"/>
</dbReference>
<dbReference type="Pfam" id="PF11638">
    <property type="entry name" value="DnaA_N"/>
    <property type="match status" value="1"/>
</dbReference>
<dbReference type="PRINTS" id="PR00051">
    <property type="entry name" value="DNAA"/>
</dbReference>
<dbReference type="SMART" id="SM00382">
    <property type="entry name" value="AAA"/>
    <property type="match status" value="1"/>
</dbReference>
<dbReference type="SMART" id="SM00760">
    <property type="entry name" value="Bac_DnaA_C"/>
    <property type="match status" value="1"/>
</dbReference>
<dbReference type="SUPFAM" id="SSF52540">
    <property type="entry name" value="P-loop containing nucleoside triphosphate hydrolases"/>
    <property type="match status" value="1"/>
</dbReference>
<dbReference type="SUPFAM" id="SSF48295">
    <property type="entry name" value="TrpR-like"/>
    <property type="match status" value="1"/>
</dbReference>
<dbReference type="PROSITE" id="PS01008">
    <property type="entry name" value="DNAA"/>
    <property type="match status" value="1"/>
</dbReference>
<comment type="function">
    <text evidence="1">Plays an essential role in the initiation and regulation of chromosomal replication. ATP-DnaA binds to the origin of replication (oriC) to initiate formation of the DNA replication initiation complex once per cell cycle. Binds the DnaA box (a 9 base pair repeat at the origin) and separates the double-stranded (ds)DNA. Forms a right-handed helical filament on oriC DNA; dsDNA binds to the exterior of the filament while single-stranded (ss)DNA is stabiized in the filament's interior. The ATP-DnaA-oriC complex binds and stabilizes one strand of the AT-rich DNA unwinding element (DUE), permitting loading of DNA polymerase. After initiation quickly degrades to an ADP-DnaA complex that is not apt for DNA replication. Binds acidic phospholipids.</text>
</comment>
<comment type="subunit">
    <text evidence="1">Oligomerizes as a right-handed, spiral filament on DNA at oriC.</text>
</comment>
<comment type="subcellular location">
    <subcellularLocation>
        <location evidence="1">Cytoplasm</location>
    </subcellularLocation>
</comment>
<comment type="domain">
    <text evidence="1">Domain I is involved in oligomerization and binding regulators, domain II is flexibile and of varying length in different bacteria, domain III forms the AAA+ region, while domain IV binds dsDNA.</text>
</comment>
<comment type="similarity">
    <text evidence="1">Belongs to the DnaA family.</text>
</comment>